<protein>
    <recommendedName>
        <fullName evidence="1">ATP synthase subunit c</fullName>
    </recommendedName>
    <alternativeName>
        <fullName evidence="1">ATP synthase F(0) sector subunit c</fullName>
    </alternativeName>
    <alternativeName>
        <fullName evidence="1">F-type ATPase subunit c</fullName>
        <shortName evidence="1">F-ATPase subunit c</shortName>
    </alternativeName>
    <alternativeName>
        <fullName evidence="1">Lipid-binding protein</fullName>
    </alternativeName>
</protein>
<feature type="chain" id="PRO_1000184357" description="ATP synthase subunit c">
    <location>
        <begin position="1"/>
        <end position="82"/>
    </location>
</feature>
<feature type="transmembrane region" description="Helical" evidence="1">
    <location>
        <begin position="7"/>
        <end position="27"/>
    </location>
</feature>
<feature type="transmembrane region" description="Helical" evidence="1">
    <location>
        <begin position="53"/>
        <end position="73"/>
    </location>
</feature>
<feature type="site" description="Reversibly protonated during proton transport" evidence="1">
    <location>
        <position position="60"/>
    </location>
</feature>
<proteinExistence type="inferred from homology"/>
<gene>
    <name evidence="1" type="primary">atpE</name>
    <name type="ordered locus">Dtpsy_0298</name>
</gene>
<name>ATPL_ACIET</name>
<accession>B9MB98</accession>
<reference key="1">
    <citation type="submission" date="2009-01" db="EMBL/GenBank/DDBJ databases">
        <title>Complete sequence of Diaphorobacter sp. TPSY.</title>
        <authorList>
            <consortium name="US DOE Joint Genome Institute"/>
            <person name="Lucas S."/>
            <person name="Copeland A."/>
            <person name="Lapidus A."/>
            <person name="Glavina del Rio T."/>
            <person name="Tice H."/>
            <person name="Bruce D."/>
            <person name="Goodwin L."/>
            <person name="Pitluck S."/>
            <person name="Chertkov O."/>
            <person name="Brettin T."/>
            <person name="Detter J.C."/>
            <person name="Han C."/>
            <person name="Larimer F."/>
            <person name="Land M."/>
            <person name="Hauser L."/>
            <person name="Kyrpides N."/>
            <person name="Mikhailova N."/>
            <person name="Coates J.D."/>
        </authorList>
    </citation>
    <scope>NUCLEOTIDE SEQUENCE [LARGE SCALE GENOMIC DNA]</scope>
    <source>
        <strain>TPSY</strain>
    </source>
</reference>
<keyword id="KW-0066">ATP synthesis</keyword>
<keyword id="KW-0997">Cell inner membrane</keyword>
<keyword id="KW-1003">Cell membrane</keyword>
<keyword id="KW-0138">CF(0)</keyword>
<keyword id="KW-0375">Hydrogen ion transport</keyword>
<keyword id="KW-0406">Ion transport</keyword>
<keyword id="KW-0446">Lipid-binding</keyword>
<keyword id="KW-0472">Membrane</keyword>
<keyword id="KW-1185">Reference proteome</keyword>
<keyword id="KW-0812">Transmembrane</keyword>
<keyword id="KW-1133">Transmembrane helix</keyword>
<keyword id="KW-0813">Transport</keyword>
<dbReference type="EMBL" id="CP001392">
    <property type="protein sequence ID" value="ACM31782.1"/>
    <property type="molecule type" value="Genomic_DNA"/>
</dbReference>
<dbReference type="RefSeq" id="WP_011803767.1">
    <property type="nucleotide sequence ID" value="NC_011992.1"/>
</dbReference>
<dbReference type="SMR" id="B9MB98"/>
<dbReference type="GeneID" id="94689759"/>
<dbReference type="KEGG" id="dia:Dtpsy_0298"/>
<dbReference type="eggNOG" id="ENOG5032S3K">
    <property type="taxonomic scope" value="Bacteria"/>
</dbReference>
<dbReference type="HOGENOM" id="CLU_148047_1_0_4"/>
<dbReference type="Proteomes" id="UP000000450">
    <property type="component" value="Chromosome"/>
</dbReference>
<dbReference type="GO" id="GO:0005886">
    <property type="term" value="C:plasma membrane"/>
    <property type="evidence" value="ECO:0007669"/>
    <property type="project" value="UniProtKB-SubCell"/>
</dbReference>
<dbReference type="GO" id="GO:0045259">
    <property type="term" value="C:proton-transporting ATP synthase complex"/>
    <property type="evidence" value="ECO:0007669"/>
    <property type="project" value="UniProtKB-KW"/>
</dbReference>
<dbReference type="GO" id="GO:0033177">
    <property type="term" value="C:proton-transporting two-sector ATPase complex, proton-transporting domain"/>
    <property type="evidence" value="ECO:0007669"/>
    <property type="project" value="InterPro"/>
</dbReference>
<dbReference type="GO" id="GO:0008289">
    <property type="term" value="F:lipid binding"/>
    <property type="evidence" value="ECO:0007669"/>
    <property type="project" value="UniProtKB-KW"/>
</dbReference>
<dbReference type="GO" id="GO:0046933">
    <property type="term" value="F:proton-transporting ATP synthase activity, rotational mechanism"/>
    <property type="evidence" value="ECO:0007669"/>
    <property type="project" value="UniProtKB-UniRule"/>
</dbReference>
<dbReference type="CDD" id="cd18185">
    <property type="entry name" value="ATP-synt_Fo_c_ATPE"/>
    <property type="match status" value="1"/>
</dbReference>
<dbReference type="FunFam" id="1.20.20.10:FF:000002">
    <property type="entry name" value="ATP synthase subunit c"/>
    <property type="match status" value="1"/>
</dbReference>
<dbReference type="Gene3D" id="1.20.20.10">
    <property type="entry name" value="F1F0 ATP synthase subunit C"/>
    <property type="match status" value="1"/>
</dbReference>
<dbReference type="HAMAP" id="MF_01396">
    <property type="entry name" value="ATP_synth_c_bact"/>
    <property type="match status" value="1"/>
</dbReference>
<dbReference type="InterPro" id="IPR005953">
    <property type="entry name" value="ATP_synth_csu_bac/chlpt"/>
</dbReference>
<dbReference type="InterPro" id="IPR000454">
    <property type="entry name" value="ATP_synth_F0_csu"/>
</dbReference>
<dbReference type="InterPro" id="IPR020537">
    <property type="entry name" value="ATP_synth_F0_csu_DDCD_BS"/>
</dbReference>
<dbReference type="InterPro" id="IPR038662">
    <property type="entry name" value="ATP_synth_F0_csu_sf"/>
</dbReference>
<dbReference type="InterPro" id="IPR002379">
    <property type="entry name" value="ATPase_proteolipid_c-like_dom"/>
</dbReference>
<dbReference type="InterPro" id="IPR035921">
    <property type="entry name" value="F/V-ATP_Csub_sf"/>
</dbReference>
<dbReference type="NCBIfam" id="TIGR01260">
    <property type="entry name" value="ATP_synt_c"/>
    <property type="match status" value="1"/>
</dbReference>
<dbReference type="NCBIfam" id="NF005363">
    <property type="entry name" value="PRK06876.1"/>
    <property type="match status" value="1"/>
</dbReference>
<dbReference type="Pfam" id="PF00137">
    <property type="entry name" value="ATP-synt_C"/>
    <property type="match status" value="1"/>
</dbReference>
<dbReference type="PRINTS" id="PR00124">
    <property type="entry name" value="ATPASEC"/>
</dbReference>
<dbReference type="SUPFAM" id="SSF81333">
    <property type="entry name" value="F1F0 ATP synthase subunit C"/>
    <property type="match status" value="1"/>
</dbReference>
<dbReference type="PROSITE" id="PS00605">
    <property type="entry name" value="ATPASE_C"/>
    <property type="match status" value="1"/>
</dbReference>
<comment type="function">
    <text evidence="1">F(1)F(0) ATP synthase produces ATP from ADP in the presence of a proton or sodium gradient. F-type ATPases consist of two structural domains, F(1) containing the extramembraneous catalytic core and F(0) containing the membrane proton channel, linked together by a central stalk and a peripheral stalk. During catalysis, ATP synthesis in the catalytic domain of F(1) is coupled via a rotary mechanism of the central stalk subunits to proton translocation.</text>
</comment>
<comment type="function">
    <text evidence="1">Key component of the F(0) channel; it plays a direct role in translocation across the membrane. A homomeric c-ring of between 10-14 subunits forms the central stalk rotor element with the F(1) delta and epsilon subunits.</text>
</comment>
<comment type="subunit">
    <text evidence="1">F-type ATPases have 2 components, F(1) - the catalytic core - and F(0) - the membrane proton channel. F(1) has five subunits: alpha(3), beta(3), gamma(1), delta(1), epsilon(1). F(0) has three main subunits: a(1), b(2) and c(10-14). The alpha and beta chains form an alternating ring which encloses part of the gamma chain. F(1) is attached to F(0) by a central stalk formed by the gamma and epsilon chains, while a peripheral stalk is formed by the delta and b chains.</text>
</comment>
<comment type="subcellular location">
    <subcellularLocation>
        <location evidence="1">Cell inner membrane</location>
        <topology evidence="1">Multi-pass membrane protein</topology>
    </subcellularLocation>
</comment>
<comment type="similarity">
    <text evidence="1">Belongs to the ATPase C chain family.</text>
</comment>
<organism>
    <name type="scientific">Acidovorax ebreus (strain TPSY)</name>
    <name type="common">Diaphorobacter sp. (strain TPSY)</name>
    <dbReference type="NCBI Taxonomy" id="535289"/>
    <lineage>
        <taxon>Bacteria</taxon>
        <taxon>Pseudomonadati</taxon>
        <taxon>Pseudomonadota</taxon>
        <taxon>Betaproteobacteria</taxon>
        <taxon>Burkholderiales</taxon>
        <taxon>Comamonadaceae</taxon>
        <taxon>Diaphorobacter</taxon>
    </lineage>
</organism>
<sequence length="82" mass="8388">MENILGLVALACGLIVGLGAIGASIGIALMGGKFLESSARQPELINELQTKMFILAGLIDAAFLIGVAIALLFAFANPFVLA</sequence>
<evidence type="ECO:0000255" key="1">
    <source>
        <dbReference type="HAMAP-Rule" id="MF_01396"/>
    </source>
</evidence>